<accession>Q9UIK5</accession>
<accession>Q2FA44</accession>
<accession>Q4ZFW4</accession>
<accession>Q53H90</accession>
<accession>Q53RE1</accession>
<accession>Q8N2R5</accession>
<accession>Q9NR15</accession>
<accession>Q9NSS5</accession>
<accession>Q9P2Y9</accession>
<accession>Q9UK65</accession>
<protein>
    <recommendedName>
        <fullName>Tomoregulin-2</fullName>
        <shortName>TR-2</shortName>
    </recommendedName>
    <alternativeName>
        <fullName>Hyperplastic polyposis protein 1</fullName>
    </alternativeName>
    <alternativeName>
        <fullName>Transmembrane protein with EGF-like and two follistatin-like domains</fullName>
    </alternativeName>
</protein>
<organism>
    <name type="scientific">Homo sapiens</name>
    <name type="common">Human</name>
    <dbReference type="NCBI Taxonomy" id="9606"/>
    <lineage>
        <taxon>Eukaryota</taxon>
        <taxon>Metazoa</taxon>
        <taxon>Chordata</taxon>
        <taxon>Craniata</taxon>
        <taxon>Vertebrata</taxon>
        <taxon>Euteleostomi</taxon>
        <taxon>Mammalia</taxon>
        <taxon>Eutheria</taxon>
        <taxon>Euarchontoglires</taxon>
        <taxon>Primates</taxon>
        <taxon>Haplorrhini</taxon>
        <taxon>Catarrhini</taxon>
        <taxon>Hominidae</taxon>
        <taxon>Homo</taxon>
    </lineage>
</organism>
<keyword id="KW-0025">Alternative splicing</keyword>
<keyword id="KW-0903">Direct protein sequencing</keyword>
<keyword id="KW-1015">Disulfide bond</keyword>
<keyword id="KW-0245">EGF-like domain</keyword>
<keyword id="KW-0325">Glycoprotein</keyword>
<keyword id="KW-0472">Membrane</keyword>
<keyword id="KW-0654">Proteoglycan</keyword>
<keyword id="KW-1267">Proteomics identification</keyword>
<keyword id="KW-1185">Reference proteome</keyword>
<keyword id="KW-0677">Repeat</keyword>
<keyword id="KW-0964">Secreted</keyword>
<keyword id="KW-0732">Signal</keyword>
<keyword id="KW-0812">Transmembrane</keyword>
<keyword id="KW-1133">Transmembrane helix</keyword>
<dbReference type="EMBL" id="AB017269">
    <property type="protein sequence ID" value="BAA87897.1"/>
    <property type="molecule type" value="mRNA"/>
</dbReference>
<dbReference type="EMBL" id="AF242221">
    <property type="protein sequence ID" value="AAG49451.1"/>
    <property type="molecule type" value="Genomic_DNA"/>
</dbReference>
<dbReference type="EMBL" id="AF242222">
    <property type="protein sequence ID" value="AAG49452.1"/>
    <property type="molecule type" value="mRNA"/>
</dbReference>
<dbReference type="EMBL" id="AF179274">
    <property type="protein sequence ID" value="AAD55776.2"/>
    <property type="molecule type" value="mRNA"/>
</dbReference>
<dbReference type="EMBL" id="DQ133599">
    <property type="protein sequence ID" value="AAZ43216.1"/>
    <property type="molecule type" value="mRNA"/>
</dbReference>
<dbReference type="EMBL" id="AY358907">
    <property type="protein sequence ID" value="AAQ89266.1"/>
    <property type="molecule type" value="mRNA"/>
</dbReference>
<dbReference type="EMBL" id="AK074507">
    <property type="protein sequence ID" value="BAC11030.1"/>
    <property type="molecule type" value="mRNA"/>
</dbReference>
<dbReference type="EMBL" id="CR457390">
    <property type="protein sequence ID" value="CAG33671.1"/>
    <property type="molecule type" value="mRNA"/>
</dbReference>
<dbReference type="EMBL" id="AK222691">
    <property type="protein sequence ID" value="BAD96411.1"/>
    <property type="molecule type" value="mRNA"/>
</dbReference>
<dbReference type="EMBL" id="AL157430">
    <property type="protein sequence ID" value="CAB75654.1"/>
    <property type="molecule type" value="mRNA"/>
</dbReference>
<dbReference type="EMBL" id="AC092644">
    <property type="protein sequence ID" value="AAY14874.1"/>
    <property type="molecule type" value="Genomic_DNA"/>
</dbReference>
<dbReference type="EMBL" id="AC098617">
    <property type="protein sequence ID" value="AAX88893.1"/>
    <property type="molecule type" value="Genomic_DNA"/>
</dbReference>
<dbReference type="EMBL" id="BC008973">
    <property type="protein sequence ID" value="AAH08973.1"/>
    <property type="molecule type" value="mRNA"/>
</dbReference>
<dbReference type="EMBL" id="AB004064">
    <property type="protein sequence ID" value="BAA90820.1"/>
    <property type="status" value="ALT_TERM"/>
    <property type="molecule type" value="mRNA"/>
</dbReference>
<dbReference type="EMBL" id="AF264150">
    <property type="protein sequence ID" value="AAF91397.1"/>
    <property type="molecule type" value="Genomic_DNA"/>
</dbReference>
<dbReference type="CCDS" id="CCDS2314.1">
    <molecule id="Q9UIK5-1"/>
</dbReference>
<dbReference type="CCDS" id="CCDS82547.1">
    <molecule id="Q9UIK5-3"/>
</dbReference>
<dbReference type="CCDS" id="CCDS82548.1">
    <molecule id="Q9UIK5-2"/>
</dbReference>
<dbReference type="PIR" id="T46914">
    <property type="entry name" value="T46914"/>
</dbReference>
<dbReference type="RefSeq" id="NP_001292063.1">
    <molecule id="Q9UIK5-2"/>
    <property type="nucleotide sequence ID" value="NM_001305134.2"/>
</dbReference>
<dbReference type="RefSeq" id="NP_001292074.1">
    <molecule id="Q9UIK5-3"/>
    <property type="nucleotide sequence ID" value="NM_001305145.1"/>
</dbReference>
<dbReference type="RefSeq" id="NP_057276.2">
    <molecule id="Q9UIK5-1"/>
    <property type="nucleotide sequence ID" value="NM_016192.3"/>
</dbReference>
<dbReference type="SMR" id="Q9UIK5"/>
<dbReference type="BioGRID" id="117189">
    <property type="interactions" value="12"/>
</dbReference>
<dbReference type="FunCoup" id="Q9UIK5">
    <property type="interactions" value="376"/>
</dbReference>
<dbReference type="IntAct" id="Q9UIK5">
    <property type="interactions" value="16"/>
</dbReference>
<dbReference type="MINT" id="Q9UIK5"/>
<dbReference type="STRING" id="9606.ENSP00000272771"/>
<dbReference type="MEROPS" id="I01.969"/>
<dbReference type="MEROPS" id="I01.978"/>
<dbReference type="GlyCosmos" id="Q9UIK5">
    <property type="glycosylation" value="3 sites, No reported glycans"/>
</dbReference>
<dbReference type="GlyGen" id="Q9UIK5">
    <property type="glycosylation" value="3 sites"/>
</dbReference>
<dbReference type="iPTMnet" id="Q9UIK5"/>
<dbReference type="PhosphoSitePlus" id="Q9UIK5"/>
<dbReference type="SwissPalm" id="Q9UIK5"/>
<dbReference type="BioMuta" id="TMEFF2"/>
<dbReference type="DMDM" id="71153590"/>
<dbReference type="jPOST" id="Q9UIK5"/>
<dbReference type="MassIVE" id="Q9UIK5"/>
<dbReference type="PaxDb" id="9606-ENSP00000272771"/>
<dbReference type="PeptideAtlas" id="Q9UIK5"/>
<dbReference type="ProteomicsDB" id="84539">
    <molecule id="Q9UIK5-1"/>
</dbReference>
<dbReference type="ProteomicsDB" id="84540">
    <molecule id="Q9UIK5-2"/>
</dbReference>
<dbReference type="ProteomicsDB" id="84541">
    <molecule id="Q9UIK5-3"/>
</dbReference>
<dbReference type="Antibodypedia" id="2895">
    <property type="antibodies" value="390 antibodies from 31 providers"/>
</dbReference>
<dbReference type="DNASU" id="23671"/>
<dbReference type="Ensembl" id="ENST00000272771.10">
    <molecule id="Q9UIK5-1"/>
    <property type="protein sequence ID" value="ENSP00000272771.5"/>
    <property type="gene ID" value="ENSG00000144339.12"/>
</dbReference>
<dbReference type="Ensembl" id="ENST00000392314.5">
    <molecule id="Q9UIK5-2"/>
    <property type="protein sequence ID" value="ENSP00000376128.1"/>
    <property type="gene ID" value="ENSG00000144339.12"/>
</dbReference>
<dbReference type="Ensembl" id="ENST00000409056.3">
    <molecule id="Q9UIK5-3"/>
    <property type="protein sequence ID" value="ENSP00000386871.3"/>
    <property type="gene ID" value="ENSG00000144339.12"/>
</dbReference>
<dbReference type="GeneID" id="23671"/>
<dbReference type="KEGG" id="hsa:23671"/>
<dbReference type="MANE-Select" id="ENST00000272771.10">
    <property type="protein sequence ID" value="ENSP00000272771.5"/>
    <property type="RefSeq nucleotide sequence ID" value="NM_016192.4"/>
    <property type="RefSeq protein sequence ID" value="NP_057276.2"/>
</dbReference>
<dbReference type="UCSC" id="uc002utc.4">
    <molecule id="Q9UIK5-1"/>
    <property type="organism name" value="human"/>
</dbReference>
<dbReference type="AGR" id="HGNC:11867"/>
<dbReference type="CTD" id="23671"/>
<dbReference type="DisGeNET" id="23671"/>
<dbReference type="GeneCards" id="TMEFF2"/>
<dbReference type="HGNC" id="HGNC:11867">
    <property type="gene designation" value="TMEFF2"/>
</dbReference>
<dbReference type="HPA" id="ENSG00000144339">
    <property type="expression patterns" value="Tissue enhanced (brain, prostate, seminal vesicle)"/>
</dbReference>
<dbReference type="MIM" id="605734">
    <property type="type" value="gene"/>
</dbReference>
<dbReference type="neXtProt" id="NX_Q9UIK5"/>
<dbReference type="OpenTargets" id="ENSG00000144339"/>
<dbReference type="PharmGKB" id="PA36568"/>
<dbReference type="VEuPathDB" id="HostDB:ENSG00000144339"/>
<dbReference type="eggNOG" id="KOG3649">
    <property type="taxonomic scope" value="Eukaryota"/>
</dbReference>
<dbReference type="GeneTree" id="ENSGT00940000156056"/>
<dbReference type="HOGENOM" id="CLU_048579_1_0_1"/>
<dbReference type="InParanoid" id="Q9UIK5"/>
<dbReference type="OMA" id="HCQGQTL"/>
<dbReference type="OrthoDB" id="328123at2759"/>
<dbReference type="PAN-GO" id="Q9UIK5">
    <property type="GO annotations" value="6 GO annotations based on evolutionary models"/>
</dbReference>
<dbReference type="PhylomeDB" id="Q9UIK5"/>
<dbReference type="TreeFam" id="TF330868"/>
<dbReference type="PathwayCommons" id="Q9UIK5"/>
<dbReference type="SignaLink" id="Q9UIK5"/>
<dbReference type="BioGRID-ORCS" id="23671">
    <property type="hits" value="7 hits in 1065 CRISPR screens"/>
</dbReference>
<dbReference type="ChiTaRS" id="TMEFF2">
    <property type="organism name" value="human"/>
</dbReference>
<dbReference type="GeneWiki" id="TMEFF2"/>
<dbReference type="GenomeRNAi" id="23671"/>
<dbReference type="Pharos" id="Q9UIK5">
    <property type="development level" value="Tbio"/>
</dbReference>
<dbReference type="PRO" id="PR:Q9UIK5"/>
<dbReference type="Proteomes" id="UP000005640">
    <property type="component" value="Chromosome 2"/>
</dbReference>
<dbReference type="RNAct" id="Q9UIK5">
    <property type="molecule type" value="protein"/>
</dbReference>
<dbReference type="Bgee" id="ENSG00000144339">
    <property type="expression patterns" value="Expressed in middle temporal gyrus and 148 other cell types or tissues"/>
</dbReference>
<dbReference type="GO" id="GO:0005576">
    <property type="term" value="C:extracellular region"/>
    <property type="evidence" value="ECO:0000318"/>
    <property type="project" value="GO_Central"/>
</dbReference>
<dbReference type="GO" id="GO:0016020">
    <property type="term" value="C:membrane"/>
    <property type="evidence" value="ECO:0000303"/>
    <property type="project" value="UniProtKB"/>
</dbReference>
<dbReference type="GO" id="GO:0030154">
    <property type="term" value="P:cell differentiation"/>
    <property type="evidence" value="ECO:0000318"/>
    <property type="project" value="GO_Central"/>
</dbReference>
<dbReference type="GO" id="GO:0030336">
    <property type="term" value="P:negative regulation of cell migration"/>
    <property type="evidence" value="ECO:0000314"/>
    <property type="project" value="MGI"/>
</dbReference>
<dbReference type="GO" id="GO:0045720">
    <property type="term" value="P:negative regulation of integrin biosynthetic process"/>
    <property type="evidence" value="ECO:0000315"/>
    <property type="project" value="MGI"/>
</dbReference>
<dbReference type="GO" id="GO:0051497">
    <property type="term" value="P:negative regulation of stress fiber assembly"/>
    <property type="evidence" value="ECO:0000314"/>
    <property type="project" value="MGI"/>
</dbReference>
<dbReference type="GO" id="GO:0044319">
    <property type="term" value="P:wound healing, spreading of cells"/>
    <property type="evidence" value="ECO:0000314"/>
    <property type="project" value="MGI"/>
</dbReference>
<dbReference type="CDD" id="cd00104">
    <property type="entry name" value="KAZAL_FS"/>
    <property type="match status" value="2"/>
</dbReference>
<dbReference type="FunFam" id="2.10.25.10:FF:000234">
    <property type="entry name" value="tomoregulin-2 isoform X1"/>
    <property type="match status" value="1"/>
</dbReference>
<dbReference type="FunFam" id="3.30.60.30:FF:000002">
    <property type="entry name" value="tomoregulin-2 isoform X1"/>
    <property type="match status" value="1"/>
</dbReference>
<dbReference type="FunFam" id="3.30.60.30:FF:000020">
    <property type="entry name" value="tomoregulin-2 isoform X2"/>
    <property type="match status" value="1"/>
</dbReference>
<dbReference type="Gene3D" id="3.30.60.30">
    <property type="match status" value="2"/>
</dbReference>
<dbReference type="Gene3D" id="2.10.25.10">
    <property type="entry name" value="Laminin"/>
    <property type="match status" value="1"/>
</dbReference>
<dbReference type="InterPro" id="IPR000742">
    <property type="entry name" value="EGF-like_dom"/>
</dbReference>
<dbReference type="InterPro" id="IPR002350">
    <property type="entry name" value="Kazal_dom"/>
</dbReference>
<dbReference type="InterPro" id="IPR036058">
    <property type="entry name" value="Kazal_dom_sf"/>
</dbReference>
<dbReference type="PANTHER" id="PTHR21632">
    <property type="entry name" value="REGULATORY PROTEIN ZESTE"/>
    <property type="match status" value="1"/>
</dbReference>
<dbReference type="PANTHER" id="PTHR21632:SF5">
    <property type="entry name" value="TOMOREGULIN-2 ISOFORM X1"/>
    <property type="match status" value="1"/>
</dbReference>
<dbReference type="Pfam" id="PF07648">
    <property type="entry name" value="Kazal_2"/>
    <property type="match status" value="2"/>
</dbReference>
<dbReference type="SMART" id="SM00280">
    <property type="entry name" value="KAZAL"/>
    <property type="match status" value="2"/>
</dbReference>
<dbReference type="SUPFAM" id="SSF57196">
    <property type="entry name" value="EGF/Laminin"/>
    <property type="match status" value="1"/>
</dbReference>
<dbReference type="SUPFAM" id="SSF100895">
    <property type="entry name" value="Kazal-type serine protease inhibitors"/>
    <property type="match status" value="2"/>
</dbReference>
<dbReference type="PROSITE" id="PS00022">
    <property type="entry name" value="EGF_1"/>
    <property type="match status" value="1"/>
</dbReference>
<dbReference type="PROSITE" id="PS01186">
    <property type="entry name" value="EGF_2"/>
    <property type="match status" value="1"/>
</dbReference>
<dbReference type="PROSITE" id="PS50026">
    <property type="entry name" value="EGF_3"/>
    <property type="match status" value="1"/>
</dbReference>
<dbReference type="PROSITE" id="PS51465">
    <property type="entry name" value="KAZAL_2"/>
    <property type="match status" value="2"/>
</dbReference>
<proteinExistence type="evidence at protein level"/>
<gene>
    <name type="primary">TMEFF2</name>
    <name type="synonym">HPP1</name>
    <name type="synonym">TENB2</name>
    <name type="synonym">TPEF</name>
    <name type="ORF">UNQ178/PRO204</name>
</gene>
<feature type="signal peptide" evidence="9">
    <location>
        <begin position="1"/>
        <end position="40"/>
    </location>
</feature>
<feature type="chain" id="PRO_0000016587" description="Tomoregulin-2">
    <location>
        <begin position="41"/>
        <end position="374"/>
    </location>
</feature>
<feature type="topological domain" description="Extracellular" evidence="1">
    <location>
        <begin position="41"/>
        <end position="320"/>
    </location>
</feature>
<feature type="transmembrane region" description="Helical" evidence="1">
    <location>
        <begin position="321"/>
        <end position="341"/>
    </location>
</feature>
<feature type="topological domain" description="Cytoplasmic" evidence="1">
    <location>
        <begin position="342"/>
        <end position="374"/>
    </location>
</feature>
<feature type="domain" description="Kazal-like 1" evidence="3">
    <location>
        <begin position="90"/>
        <end position="137"/>
    </location>
</feature>
<feature type="domain" description="Kazal-like 2" evidence="3">
    <location>
        <begin position="181"/>
        <end position="229"/>
    </location>
</feature>
<feature type="domain" description="EGF-like" evidence="2">
    <location>
        <begin position="261"/>
        <end position="301"/>
    </location>
</feature>
<feature type="region of interest" description="Required for shedding" evidence="12">
    <location>
        <begin position="303"/>
        <end position="320"/>
    </location>
</feature>
<feature type="region of interest" description="Disordered" evidence="4">
    <location>
        <begin position="353"/>
        <end position="374"/>
    </location>
</feature>
<feature type="compositionally biased region" description="Polar residues" evidence="4">
    <location>
        <begin position="356"/>
        <end position="374"/>
    </location>
</feature>
<feature type="site" description="Reactive bond" evidence="3">
    <location>
        <begin position="97"/>
        <end position="98"/>
    </location>
</feature>
<feature type="site" description="Reactive bond" evidence="3">
    <location>
        <begin position="188"/>
        <end position="189"/>
    </location>
</feature>
<feature type="glycosylation site" description="N-linked (GlcNAc...) (complex) asparagine; atypical" evidence="13">
    <location>
        <position position="204"/>
    </location>
</feature>
<feature type="glycosylation site" description="N-linked (GlcNAc...) asparagine" evidence="1">
    <location>
        <position position="230"/>
    </location>
</feature>
<feature type="disulfide bond" evidence="3">
    <location>
        <begin position="91"/>
        <end position="121"/>
    </location>
</feature>
<feature type="disulfide bond" evidence="3">
    <location>
        <begin position="95"/>
        <end position="114"/>
    </location>
</feature>
<feature type="disulfide bond" evidence="3">
    <location>
        <begin position="103"/>
        <end position="135"/>
    </location>
</feature>
<feature type="disulfide bond" evidence="3">
    <location>
        <begin position="182"/>
        <end position="213"/>
    </location>
</feature>
<feature type="disulfide bond" evidence="3">
    <location>
        <begin position="186"/>
        <end position="206"/>
    </location>
</feature>
<feature type="disulfide bond" evidence="3">
    <location>
        <begin position="195"/>
        <end position="227"/>
    </location>
</feature>
<feature type="disulfide bond" evidence="2">
    <location>
        <begin position="265"/>
        <end position="278"/>
    </location>
</feature>
<feature type="disulfide bond" evidence="2">
    <location>
        <begin position="273"/>
        <end position="289"/>
    </location>
</feature>
<feature type="disulfide bond" evidence="2">
    <location>
        <begin position="291"/>
        <end position="300"/>
    </location>
</feature>
<feature type="splice variant" id="VSP_024973" description="In isoform 3." evidence="14">
    <original>VHEGSGETSQKETSTCDICQFGAECDEDA</original>
    <variation>GRSCLFTYLKIYWWILLCIFTYVCSISDI</variation>
    <location>
        <begin position="147"/>
        <end position="175"/>
    </location>
</feature>
<feature type="splice variant" id="VSP_024974" description="In isoform 3." evidence="14">
    <location>
        <begin position="176"/>
        <end position="374"/>
    </location>
</feature>
<feature type="splice variant" id="VSP_014312" description="In isoform 2." evidence="15 16">
    <original>KCP</original>
    <variation>AKL</variation>
    <location>
        <begin position="344"/>
        <end position="346"/>
    </location>
</feature>
<feature type="splice variant" id="VSP_014313" description="In isoform 2." evidence="15 16">
    <location>
        <begin position="347"/>
        <end position="374"/>
    </location>
</feature>
<feature type="sequence conflict" description="In Ref. 8; BAD96411." evidence="17" ref="8">
    <original>M</original>
    <variation>V</variation>
    <location>
        <position position="28"/>
    </location>
</feature>
<feature type="sequence conflict" description="In Ref. 6; BAC11030." evidence="17" ref="6">
    <original>E</original>
    <variation>G</variation>
    <location>
        <position position="63"/>
    </location>
</feature>
<feature type="sequence conflict" description="In Ref. 8; BAD96411." evidence="17" ref="8">
    <original>M</original>
    <variation>T</variation>
    <location>
        <position position="222"/>
    </location>
</feature>
<feature type="sequence conflict" description="In Ref. 8; BAD96411." evidence="17" ref="8">
    <original>L</original>
    <variation>H</variation>
    <location>
        <position position="339"/>
    </location>
</feature>
<reference key="1">
    <citation type="journal article" date="2000" name="Genomics">
        <title>Identification and characterization of TMEFF2, a novel survival factor for hippocampal and mesencephalic neurons.</title>
        <authorList>
            <person name="Horie M."/>
            <person name="Mitsumoto Y."/>
            <person name="Kyushiki H."/>
            <person name="Kanemoto N."/>
            <person name="Watanabe A."/>
            <person name="Taniguchi Y."/>
            <person name="Nishino N."/>
            <person name="Okamoto T."/>
            <person name="Kondo M."/>
            <person name="Mori T."/>
            <person name="Noguchi K."/>
            <person name="Nakamura Y."/>
            <person name="Takahashi E."/>
            <person name="Tanigami A."/>
        </authorList>
    </citation>
    <scope>NUCLEOTIDE SEQUENCE [MRNA] (ISOFORM 1)</scope>
    <scope>FUNCTION</scope>
    <scope>TISSUE SPECIFICITY</scope>
    <source>
        <tissue>Brain</tissue>
    </source>
</reference>
<reference key="2">
    <citation type="journal article" date="2000" name="Cancer Res.">
        <title>The gene for a novel transmembrane protein containing epidermal growth factor and follistatin domains is frequently hypermethylated in human tumor cells.</title>
        <authorList>
            <person name="Liang G."/>
            <person name="Robertson K.D."/>
            <person name="Talmadge C."/>
            <person name="Sumegi J."/>
            <person name="Jones P.A."/>
        </authorList>
    </citation>
    <scope>NUCLEOTIDE SEQUENCE [MRNA] (ISOFORM 1)</scope>
    <scope>NUCLEOTIDE SEQUENCE [GENOMIC DNA] OF 1-57</scope>
    <scope>INDUCTION</scope>
    <scope>TISSUE SPECIFICITY</scope>
    <source>
        <tissue>Brain</tissue>
    </source>
</reference>
<reference key="3">
    <citation type="journal article" date="2001" name="Int. J. Cancer">
        <title>TENB2, a proteoglycan identified in prostate cancer that is associated with disease progression and androgen independence.</title>
        <authorList>
            <person name="Glynne-Jones E."/>
            <person name="Harper M.E."/>
            <person name="Seery L.T."/>
            <person name="James R."/>
            <person name="Anglin I."/>
            <person name="Morgan H.E."/>
            <person name="Taylor K.M."/>
            <person name="Gee J.M."/>
            <person name="Nicholson R.I."/>
        </authorList>
    </citation>
    <scope>NUCLEOTIDE SEQUENCE [MRNA] (ISOFORM 1)</scope>
    <scope>GLYCOSYLATION</scope>
    <scope>TISSUE SPECIFICITY</scope>
    <source>
        <tissue>Prostatic carcinoma</tissue>
    </source>
</reference>
<reference key="4">
    <citation type="journal article" date="2006" name="Genomics">
        <title>A truncated isoform of TMEFF2 encodes a secreted protein in prostate cancer cells.</title>
        <authorList>
            <person name="Quayle S.N."/>
            <person name="Sadar M.D."/>
        </authorList>
    </citation>
    <scope>NUCLEOTIDE SEQUENCE [MRNA] (ISOFORM 3)</scope>
    <scope>TISSUE SPECIFICITY</scope>
</reference>
<reference key="5">
    <citation type="journal article" date="2003" name="Genome Res.">
        <title>The secreted protein discovery initiative (SPDI), a large-scale effort to identify novel human secreted and transmembrane proteins: a bioinformatics assessment.</title>
        <authorList>
            <person name="Clark H.F."/>
            <person name="Gurney A.L."/>
            <person name="Abaya E."/>
            <person name="Baker K."/>
            <person name="Baldwin D.T."/>
            <person name="Brush J."/>
            <person name="Chen J."/>
            <person name="Chow B."/>
            <person name="Chui C."/>
            <person name="Crowley C."/>
            <person name="Currell B."/>
            <person name="Deuel B."/>
            <person name="Dowd P."/>
            <person name="Eaton D."/>
            <person name="Foster J.S."/>
            <person name="Grimaldi C."/>
            <person name="Gu Q."/>
            <person name="Hass P.E."/>
            <person name="Heldens S."/>
            <person name="Huang A."/>
            <person name="Kim H.S."/>
            <person name="Klimowski L."/>
            <person name="Jin Y."/>
            <person name="Johnson S."/>
            <person name="Lee J."/>
            <person name="Lewis L."/>
            <person name="Liao D."/>
            <person name="Mark M.R."/>
            <person name="Robbie E."/>
            <person name="Sanchez C."/>
            <person name="Schoenfeld J."/>
            <person name="Seshagiri S."/>
            <person name="Simmons L."/>
            <person name="Singh J."/>
            <person name="Smith V."/>
            <person name="Stinson J."/>
            <person name="Vagts A."/>
            <person name="Vandlen R.L."/>
            <person name="Watanabe C."/>
            <person name="Wieand D."/>
            <person name="Woods K."/>
            <person name="Xie M.-H."/>
            <person name="Yansura D.G."/>
            <person name="Yi S."/>
            <person name="Yu G."/>
            <person name="Yuan J."/>
            <person name="Zhang M."/>
            <person name="Zhang Z."/>
            <person name="Goddard A.D."/>
            <person name="Wood W.I."/>
            <person name="Godowski P.J."/>
            <person name="Gray A.M."/>
        </authorList>
    </citation>
    <scope>NUCLEOTIDE SEQUENCE [LARGE SCALE MRNA] (ISOFORM 1)</scope>
</reference>
<reference key="6">
    <citation type="journal article" date="2004" name="Nat. Genet.">
        <title>Complete sequencing and characterization of 21,243 full-length human cDNAs.</title>
        <authorList>
            <person name="Ota T."/>
            <person name="Suzuki Y."/>
            <person name="Nishikawa T."/>
            <person name="Otsuki T."/>
            <person name="Sugiyama T."/>
            <person name="Irie R."/>
            <person name="Wakamatsu A."/>
            <person name="Hayashi K."/>
            <person name="Sato H."/>
            <person name="Nagai K."/>
            <person name="Kimura K."/>
            <person name="Makita H."/>
            <person name="Sekine M."/>
            <person name="Obayashi M."/>
            <person name="Nishi T."/>
            <person name="Shibahara T."/>
            <person name="Tanaka T."/>
            <person name="Ishii S."/>
            <person name="Yamamoto J."/>
            <person name="Saito K."/>
            <person name="Kawai Y."/>
            <person name="Isono Y."/>
            <person name="Nakamura Y."/>
            <person name="Nagahari K."/>
            <person name="Murakami K."/>
            <person name="Yasuda T."/>
            <person name="Iwayanagi T."/>
            <person name="Wagatsuma M."/>
            <person name="Shiratori A."/>
            <person name="Sudo H."/>
            <person name="Hosoiri T."/>
            <person name="Kaku Y."/>
            <person name="Kodaira H."/>
            <person name="Kondo H."/>
            <person name="Sugawara M."/>
            <person name="Takahashi M."/>
            <person name="Kanda K."/>
            <person name="Yokoi T."/>
            <person name="Furuya T."/>
            <person name="Kikkawa E."/>
            <person name="Omura Y."/>
            <person name="Abe K."/>
            <person name="Kamihara K."/>
            <person name="Katsuta N."/>
            <person name="Sato K."/>
            <person name="Tanikawa M."/>
            <person name="Yamazaki M."/>
            <person name="Ninomiya K."/>
            <person name="Ishibashi T."/>
            <person name="Yamashita H."/>
            <person name="Murakawa K."/>
            <person name="Fujimori K."/>
            <person name="Tanai H."/>
            <person name="Kimata M."/>
            <person name="Watanabe M."/>
            <person name="Hiraoka S."/>
            <person name="Chiba Y."/>
            <person name="Ishida S."/>
            <person name="Ono Y."/>
            <person name="Takiguchi S."/>
            <person name="Watanabe S."/>
            <person name="Yosida M."/>
            <person name="Hotuta T."/>
            <person name="Kusano J."/>
            <person name="Kanehori K."/>
            <person name="Takahashi-Fujii A."/>
            <person name="Hara H."/>
            <person name="Tanase T.-O."/>
            <person name="Nomura Y."/>
            <person name="Togiya S."/>
            <person name="Komai F."/>
            <person name="Hara R."/>
            <person name="Takeuchi K."/>
            <person name="Arita M."/>
            <person name="Imose N."/>
            <person name="Musashino K."/>
            <person name="Yuuki H."/>
            <person name="Oshima A."/>
            <person name="Sasaki N."/>
            <person name="Aotsuka S."/>
            <person name="Yoshikawa Y."/>
            <person name="Matsunawa H."/>
            <person name="Ichihara T."/>
            <person name="Shiohata N."/>
            <person name="Sano S."/>
            <person name="Moriya S."/>
            <person name="Momiyama H."/>
            <person name="Satoh N."/>
            <person name="Takami S."/>
            <person name="Terashima Y."/>
            <person name="Suzuki O."/>
            <person name="Nakagawa S."/>
            <person name="Senoh A."/>
            <person name="Mizoguchi H."/>
            <person name="Goto Y."/>
            <person name="Shimizu F."/>
            <person name="Wakebe H."/>
            <person name="Hishigaki H."/>
            <person name="Watanabe T."/>
            <person name="Sugiyama A."/>
            <person name="Takemoto M."/>
            <person name="Kawakami B."/>
            <person name="Yamazaki M."/>
            <person name="Watanabe K."/>
            <person name="Kumagai A."/>
            <person name="Itakura S."/>
            <person name="Fukuzumi Y."/>
            <person name="Fujimori Y."/>
            <person name="Komiyama M."/>
            <person name="Tashiro H."/>
            <person name="Tanigami A."/>
            <person name="Fujiwara T."/>
            <person name="Ono T."/>
            <person name="Yamada K."/>
            <person name="Fujii Y."/>
            <person name="Ozaki K."/>
            <person name="Hirao M."/>
            <person name="Ohmori Y."/>
            <person name="Kawabata A."/>
            <person name="Hikiji T."/>
            <person name="Kobatake N."/>
            <person name="Inagaki H."/>
            <person name="Ikema Y."/>
            <person name="Okamoto S."/>
            <person name="Okitani R."/>
            <person name="Kawakami T."/>
            <person name="Noguchi S."/>
            <person name="Itoh T."/>
            <person name="Shigeta K."/>
            <person name="Senba T."/>
            <person name="Matsumura K."/>
            <person name="Nakajima Y."/>
            <person name="Mizuno T."/>
            <person name="Morinaga M."/>
            <person name="Sasaki M."/>
            <person name="Togashi T."/>
            <person name="Oyama M."/>
            <person name="Hata H."/>
            <person name="Watanabe M."/>
            <person name="Komatsu T."/>
            <person name="Mizushima-Sugano J."/>
            <person name="Satoh T."/>
            <person name="Shirai Y."/>
            <person name="Takahashi Y."/>
            <person name="Nakagawa K."/>
            <person name="Okumura K."/>
            <person name="Nagase T."/>
            <person name="Nomura N."/>
            <person name="Kikuchi H."/>
            <person name="Masuho Y."/>
            <person name="Yamashita R."/>
            <person name="Nakai K."/>
            <person name="Yada T."/>
            <person name="Nakamura Y."/>
            <person name="Ohara O."/>
            <person name="Isogai T."/>
            <person name="Sugano S."/>
        </authorList>
    </citation>
    <scope>NUCLEOTIDE SEQUENCE [LARGE SCALE MRNA] (ISOFORM 1)</scope>
    <source>
        <tissue>Embryo</tissue>
    </source>
</reference>
<reference key="7">
    <citation type="submission" date="2004-06" db="EMBL/GenBank/DDBJ databases">
        <title>Cloning of human full open reading frames in Gateway(TM) system entry vector (pDONR201).</title>
        <authorList>
            <person name="Ebert L."/>
            <person name="Schick M."/>
            <person name="Neubert P."/>
            <person name="Schatten R."/>
            <person name="Henze S."/>
            <person name="Korn B."/>
        </authorList>
    </citation>
    <scope>NUCLEOTIDE SEQUENCE [LARGE SCALE MRNA] (ISOFORM 2)</scope>
</reference>
<reference key="8">
    <citation type="submission" date="2005-04" db="EMBL/GenBank/DDBJ databases">
        <authorList>
            <person name="Suzuki Y."/>
            <person name="Sugano S."/>
            <person name="Totoki Y."/>
            <person name="Toyoda A."/>
            <person name="Takeda T."/>
            <person name="Sakaki Y."/>
            <person name="Tanaka A."/>
            <person name="Yokoyama S."/>
        </authorList>
    </citation>
    <scope>NUCLEOTIDE SEQUENCE [LARGE SCALE MRNA] (ISOFORM 1)</scope>
    <source>
        <tissue>Brain</tissue>
    </source>
</reference>
<reference key="9">
    <citation type="journal article" date="2007" name="BMC Genomics">
        <title>The full-ORF clone resource of the German cDNA consortium.</title>
        <authorList>
            <person name="Bechtel S."/>
            <person name="Rosenfelder H."/>
            <person name="Duda A."/>
            <person name="Schmidt C.P."/>
            <person name="Ernst U."/>
            <person name="Wellenreuther R."/>
            <person name="Mehrle A."/>
            <person name="Schuster C."/>
            <person name="Bahr A."/>
            <person name="Bloecker H."/>
            <person name="Heubner D."/>
            <person name="Hoerlein A."/>
            <person name="Michel G."/>
            <person name="Wedler H."/>
            <person name="Koehrer K."/>
            <person name="Ottenwaelder B."/>
            <person name="Poustka A."/>
            <person name="Wiemann S."/>
            <person name="Schupp I."/>
        </authorList>
    </citation>
    <scope>NUCLEOTIDE SEQUENCE [LARGE SCALE MRNA] (ISOFORM 2)</scope>
    <source>
        <tissue>Brain</tissue>
    </source>
</reference>
<reference key="10">
    <citation type="journal article" date="2005" name="Nature">
        <title>Generation and annotation of the DNA sequences of human chromosomes 2 and 4.</title>
        <authorList>
            <person name="Hillier L.W."/>
            <person name="Graves T.A."/>
            <person name="Fulton R.S."/>
            <person name="Fulton L.A."/>
            <person name="Pepin K.H."/>
            <person name="Minx P."/>
            <person name="Wagner-McPherson C."/>
            <person name="Layman D."/>
            <person name="Wylie K."/>
            <person name="Sekhon M."/>
            <person name="Becker M.C."/>
            <person name="Fewell G.A."/>
            <person name="Delehaunty K.D."/>
            <person name="Miner T.L."/>
            <person name="Nash W.E."/>
            <person name="Kremitzki C."/>
            <person name="Oddy L."/>
            <person name="Du H."/>
            <person name="Sun H."/>
            <person name="Bradshaw-Cordum H."/>
            <person name="Ali J."/>
            <person name="Carter J."/>
            <person name="Cordes M."/>
            <person name="Harris A."/>
            <person name="Isak A."/>
            <person name="van Brunt A."/>
            <person name="Nguyen C."/>
            <person name="Du F."/>
            <person name="Courtney L."/>
            <person name="Kalicki J."/>
            <person name="Ozersky P."/>
            <person name="Abbott S."/>
            <person name="Armstrong J."/>
            <person name="Belter E.A."/>
            <person name="Caruso L."/>
            <person name="Cedroni M."/>
            <person name="Cotton M."/>
            <person name="Davidson T."/>
            <person name="Desai A."/>
            <person name="Elliott G."/>
            <person name="Erb T."/>
            <person name="Fronick C."/>
            <person name="Gaige T."/>
            <person name="Haakenson W."/>
            <person name="Haglund K."/>
            <person name="Holmes A."/>
            <person name="Harkins R."/>
            <person name="Kim K."/>
            <person name="Kruchowski S.S."/>
            <person name="Strong C.M."/>
            <person name="Grewal N."/>
            <person name="Goyea E."/>
            <person name="Hou S."/>
            <person name="Levy A."/>
            <person name="Martinka S."/>
            <person name="Mead K."/>
            <person name="McLellan M.D."/>
            <person name="Meyer R."/>
            <person name="Randall-Maher J."/>
            <person name="Tomlinson C."/>
            <person name="Dauphin-Kohlberg S."/>
            <person name="Kozlowicz-Reilly A."/>
            <person name="Shah N."/>
            <person name="Swearengen-Shahid S."/>
            <person name="Snider J."/>
            <person name="Strong J.T."/>
            <person name="Thompson J."/>
            <person name="Yoakum M."/>
            <person name="Leonard S."/>
            <person name="Pearman C."/>
            <person name="Trani L."/>
            <person name="Radionenko M."/>
            <person name="Waligorski J.E."/>
            <person name="Wang C."/>
            <person name="Rock S.M."/>
            <person name="Tin-Wollam A.-M."/>
            <person name="Maupin R."/>
            <person name="Latreille P."/>
            <person name="Wendl M.C."/>
            <person name="Yang S.-P."/>
            <person name="Pohl C."/>
            <person name="Wallis J.W."/>
            <person name="Spieth J."/>
            <person name="Bieri T.A."/>
            <person name="Berkowicz N."/>
            <person name="Nelson J.O."/>
            <person name="Osborne J."/>
            <person name="Ding L."/>
            <person name="Meyer R."/>
            <person name="Sabo A."/>
            <person name="Shotland Y."/>
            <person name="Sinha P."/>
            <person name="Wohldmann P.E."/>
            <person name="Cook L.L."/>
            <person name="Hickenbotham M.T."/>
            <person name="Eldred J."/>
            <person name="Williams D."/>
            <person name="Jones T.A."/>
            <person name="She X."/>
            <person name="Ciccarelli F.D."/>
            <person name="Izaurralde E."/>
            <person name="Taylor J."/>
            <person name="Schmutz J."/>
            <person name="Myers R.M."/>
            <person name="Cox D.R."/>
            <person name="Huang X."/>
            <person name="McPherson J.D."/>
            <person name="Mardis E.R."/>
            <person name="Clifton S.W."/>
            <person name="Warren W.C."/>
            <person name="Chinwalla A.T."/>
            <person name="Eddy S.R."/>
            <person name="Marra M.A."/>
            <person name="Ovcharenko I."/>
            <person name="Furey T.S."/>
            <person name="Miller W."/>
            <person name="Eichler E.E."/>
            <person name="Bork P."/>
            <person name="Suyama M."/>
            <person name="Torrents D."/>
            <person name="Waterston R.H."/>
            <person name="Wilson R.K."/>
        </authorList>
    </citation>
    <scope>NUCLEOTIDE SEQUENCE [LARGE SCALE GENOMIC DNA]</scope>
</reference>
<reference key="11">
    <citation type="journal article" date="2004" name="Genome Res.">
        <title>The status, quality, and expansion of the NIH full-length cDNA project: the Mammalian Gene Collection (MGC).</title>
        <authorList>
            <consortium name="The MGC Project Team"/>
        </authorList>
    </citation>
    <scope>NUCLEOTIDE SEQUENCE [LARGE SCALE MRNA] (ISOFORM 1)</scope>
    <source>
        <tissue>Brain</tissue>
    </source>
</reference>
<reference key="12">
    <citation type="journal article" date="1999" name="Biochem. Biophys. Res. Commun.">
        <title>A novel epidermal growth factor-like molecule containing two follistatin modules stimulates tyrosine phosphorylation of erbB-4 in MKN28 gastric cancer cells.</title>
        <authorList>
            <person name="Uchida T."/>
            <person name="Wada K."/>
            <person name="Akamatsu T."/>
            <person name="Yonezawa M."/>
            <person name="Noguchi H."/>
            <person name="Mizoguchi A."/>
            <person name="Kasuga M."/>
            <person name="Sakamoto C."/>
        </authorList>
    </citation>
    <scope>NUCLEOTIDE SEQUENCE [MRNA] OF 1-360</scope>
</reference>
<reference key="13">
    <citation type="journal article" date="2001" name="Proc. Natl. Acad. Sci. U.S.A.">
        <title>HPP1: a transmembrane protein-encoding gene commonly methylated in colorectal polyps and cancers.</title>
        <authorList>
            <person name="Young J."/>
            <person name="Biden K.G."/>
            <person name="Simms L.A."/>
            <person name="Huggard P."/>
            <person name="Karamatic R."/>
            <person name="Eyre H.J."/>
            <person name="Sutherland G.R."/>
            <person name="Herath N."/>
            <person name="Barker M."/>
            <person name="Anderson G.J."/>
            <person name="Fitzpatrick D.R."/>
            <person name="Ramm G.A."/>
            <person name="Jass J.R."/>
            <person name="Leggett B.A."/>
        </authorList>
    </citation>
    <scope>NUCLEOTIDE SEQUENCE [GENOMIC DNA] OF 1-57</scope>
    <scope>TISSUE SPECIFICITY</scope>
    <scope>INDUCTION</scope>
    <source>
        <tissue>Colon</tissue>
    </source>
</reference>
<reference key="14">
    <citation type="journal article" date="2004" name="Protein Sci.">
        <title>Signal peptide prediction based on analysis of experimentally verified cleavage sites.</title>
        <authorList>
            <person name="Zhang Z."/>
            <person name="Henzel W.J."/>
        </authorList>
    </citation>
    <scope>PROTEIN SEQUENCE OF 41-55</scope>
</reference>
<reference key="15">
    <citation type="journal article" date="2006" name="J. Neurochem.">
        <title>Tomoregulin-2 is found extensively in plaques in Alzheimer's disease brain.</title>
        <authorList>
            <person name="Siegel D.A."/>
            <person name="Davies P."/>
            <person name="Dobrenis K."/>
            <person name="Huang M."/>
        </authorList>
    </citation>
    <scope>TISSUE SPECIFICITY</scope>
</reference>
<reference key="16">
    <citation type="journal article" date="2007" name="J. Biol. Chem.">
        <title>Phorbol ester-induced shedding of the prostate cancer marker transmembrane protein with epidermal growth factor and two follistatin motifs 2 is mediated by the disintegrin and metalloproteinase-17.</title>
        <authorList>
            <person name="Ali N."/>
            <person name="Knaeuper V."/>
        </authorList>
    </citation>
    <scope>CLEAVAGE</scope>
    <scope>FUNCTION</scope>
</reference>
<reference key="17">
    <citation type="journal article" date="2009" name="Mol. Cell. Proteomics">
        <title>A strategy for precise and large scale identification of core fucosylated glycoproteins.</title>
        <authorList>
            <person name="Jia W."/>
            <person name="Lu Z."/>
            <person name="Fu Y."/>
            <person name="Wang H.P."/>
            <person name="Wang L.H."/>
            <person name="Chi H."/>
            <person name="Yuan Z.F."/>
            <person name="Zheng Z.B."/>
            <person name="Song L.N."/>
            <person name="Han H.H."/>
            <person name="Liang Y.M."/>
            <person name="Wang J.L."/>
            <person name="Cai Y."/>
            <person name="Zhang Y.K."/>
            <person name="Deng Y.L."/>
            <person name="Ying W.T."/>
            <person name="He S.M."/>
            <person name="Qian X.H."/>
        </authorList>
    </citation>
    <scope>GLYCOSYLATION AT ASN-204</scope>
</reference>
<name>TEFF2_HUMAN</name>
<comment type="function">
    <text evidence="5 12">May be a survival factor for hippocampal and mesencephalic neurons. The shedded form up-regulates cancer cell proliferation, probably by promoting ERK1/2 phosphorylation.</text>
</comment>
<comment type="interaction">
    <interactant intactId="EBI-11423693">
        <id>Q9UIK5</id>
    </interactant>
    <interactant intactId="EBI-21194918">
        <id>PRO_0000000090</id>
        <label>APP</label>
        <dbReference type="UniProtKB" id="P05067"/>
    </interactant>
    <organismsDiffer>false</organismsDiffer>
    <experiments>3</experiments>
</comment>
<comment type="interaction">
    <interactant intactId="EBI-11423693">
        <id>Q9UIK5</id>
    </interactant>
    <interactant intactId="EBI-7116203">
        <id>O75031</id>
        <label>HSF2BP</label>
    </interactant>
    <organismsDiffer>false</organismsDiffer>
    <experiments>3</experiments>
</comment>
<comment type="interaction">
    <interactant intactId="EBI-11423693">
        <id>Q9UIK5</id>
    </interactant>
    <interactant intactId="EBI-22310682">
        <id>P0DPK4</id>
        <label>NOTCH2NLC</label>
    </interactant>
    <organismsDiffer>false</organismsDiffer>
    <experiments>3</experiments>
</comment>
<comment type="interaction">
    <interactant intactId="EBI-11423693">
        <id>Q9UIK5</id>
    </interactant>
    <interactant intactId="EBI-12375429">
        <id>Q7Z5B4-5</id>
        <label>RIC3</label>
    </interactant>
    <organismsDiffer>false</organismsDiffer>
    <experiments>3</experiments>
</comment>
<comment type="interaction">
    <interactant intactId="EBI-11423693">
        <id>Q9UIK5</id>
    </interactant>
    <interactant intactId="EBI-10982110">
        <id>Q96Q45-2</id>
        <label>TMEM237</label>
    </interactant>
    <organismsDiffer>false</organismsDiffer>
    <experiments>3</experiments>
</comment>
<comment type="interaction">
    <interactant intactId="EBI-11423693">
        <id>Q9UIK5</id>
    </interactant>
    <interactant intactId="EBI-18055230">
        <id>P34981</id>
        <label>TRHR</label>
    </interactant>
    <organismsDiffer>false</organismsDiffer>
    <experiments>3</experiments>
</comment>
<comment type="interaction">
    <interactant intactId="EBI-11423693">
        <id>Q9UIK5</id>
    </interactant>
    <interactant intactId="EBI-2819725">
        <id>Q9Y5Z9</id>
        <label>UBIAD1</label>
    </interactant>
    <organismsDiffer>false</organismsDiffer>
    <experiments>3</experiments>
</comment>
<comment type="interaction">
    <interactant intactId="EBI-11423693">
        <id>Q9UIK5</id>
    </interactant>
    <interactant intactId="EBI-12837904">
        <id>Q96MV8</id>
        <label>ZDHHC15</label>
    </interactant>
    <organismsDiffer>false</organismsDiffer>
    <experiments>3</experiments>
</comment>
<comment type="interaction">
    <interactant intactId="EBI-25835153">
        <id>Q9UIK5-2</id>
    </interactant>
    <interactant intactId="EBI-718729">
        <id>P55212</id>
        <label>CASP6</label>
    </interactant>
    <organismsDiffer>false</organismsDiffer>
    <experiments>3</experiments>
</comment>
<comment type="interaction">
    <interactant intactId="EBI-25835153">
        <id>Q9UIK5-2</id>
    </interactant>
    <interactant intactId="EBI-5280197">
        <id>O75400-2</id>
        <label>PRPF40A</label>
    </interactant>
    <organismsDiffer>false</organismsDiffer>
    <experiments>3</experiments>
</comment>
<comment type="interaction">
    <interactant intactId="EBI-25835153">
        <id>Q9UIK5-2</id>
    </interactant>
    <interactant intactId="EBI-286642">
        <id>P62826</id>
        <label>RAN</label>
    </interactant>
    <organismsDiffer>false</organismsDiffer>
    <experiments>3</experiments>
</comment>
<comment type="subcellular location">
    <molecule>Isoform 1</molecule>
    <subcellularLocation>
        <location evidence="17">Membrane</location>
        <topology evidence="17">Single-pass type I membrane protein</topology>
    </subcellularLocation>
</comment>
<comment type="subcellular location">
    <molecule>Isoform 2</molecule>
    <subcellularLocation>
        <location evidence="17">Membrane</location>
        <topology evidence="17">Single-pass type I membrane protein</topology>
    </subcellularLocation>
</comment>
<comment type="subcellular location">
    <molecule>Isoform 3</molecule>
    <subcellularLocation>
        <location>Secreted</location>
    </subcellularLocation>
</comment>
<comment type="alternative products">
    <event type="alternative splicing"/>
    <isoform>
        <id>Q9UIK5-1</id>
        <name>1</name>
        <sequence type="displayed"/>
    </isoform>
    <isoform>
        <id>Q9UIK5-2</id>
        <name>2</name>
        <sequence type="described" ref="VSP_014312 VSP_014313"/>
    </isoform>
    <isoform>
        <id>Q9UIK5-3</id>
        <name>3</name>
        <name>TMEFF2-S</name>
        <sequence type="described" ref="VSP_024973 VSP_024974"/>
    </isoform>
</comment>
<comment type="tissue specificity">
    <text evidence="5 6 7 8 10 11">Highly expressed in adult and fetal brain, spinal cord and prostate. Expressed in all brain regions except the pituitary gland, with highest levels in amygdala and corpus callosum. Expressed in the pericryptal myofibroblasts and other stromal cells of normal colonic mucosa. Expressed in prostate carcinoma. Down-regulated in colorectal cancer. Present in Alzheimer disease plaques (at protein level). Isoform 3 is expressed weakly in testis and at high levels in normal and cancerous prostate.</text>
</comment>
<comment type="induction">
    <text evidence="6 7">Down-regulated in tumor cell lines in response to a high level of methylation in the 5' region. The CpG island methylation correlates with TMEFF2 silencing in tumor cell lines.</text>
</comment>
<comment type="PTM">
    <text evidence="8">O-glycosylated; contains chondroitin sulfate glycosaminoglycans.</text>
</comment>
<comment type="PTM">
    <text>A soluble form (TMEFF2-ECD) is produced by proteolytic shedding. This shedding can be induced by phorbol ester or pro-inflammatory cytokines such as TNFalpha, and is mediated by ADAM17.</text>
</comment>
<comment type="similarity">
    <text evidence="12">Belongs to the tomoregulin family.</text>
</comment>
<comment type="sequence caution" evidence="17">
    <conflict type="miscellaneous discrepancy">
        <sequence resource="EMBL-CDS" id="BAA90820"/>
    </conflict>
    <text>Contaminating sequence. Mitochondrial contamination starting in position 361.</text>
</comment>
<sequence>MVLWESPRQCSSWTLCEGFCWLLLLPVMLLIVARPVKLAAFPTSLSDCQTPTGWNCSGYDDRENDLFLCDTNTCKFDGECLRIGDTVTCVCQFKCNNDYVPVCGSNGESYQNECYLRQAACKQQSEILVVSEGSCATDAGSGSGDGVHEGSGETSQKETSTCDICQFGAECDEDAEDVWCVCNIDCSQTNFNPLCASDGKSYDNACQIKEASCQKQEKIEVMSLGRCQDNTTTTTKSEDGHYARTDYAENANKLEESAREHHIPCPEHYNGFCMHGKCEHSINMQEPSCRCDAGYTGQHCEKKDYSVLYVVPGPVRFQYVLIAAVIGTIQIAVICVVVLCITRKCPRSNRIHRQKQNTGHYSSDNTTRASTRLI</sequence>
<evidence type="ECO:0000255" key="1"/>
<evidence type="ECO:0000255" key="2">
    <source>
        <dbReference type="PROSITE-ProRule" id="PRU00076"/>
    </source>
</evidence>
<evidence type="ECO:0000255" key="3">
    <source>
        <dbReference type="PROSITE-ProRule" id="PRU00798"/>
    </source>
</evidence>
<evidence type="ECO:0000256" key="4">
    <source>
        <dbReference type="SAM" id="MobiDB-lite"/>
    </source>
</evidence>
<evidence type="ECO:0000269" key="5">
    <source>
    </source>
</evidence>
<evidence type="ECO:0000269" key="6">
    <source>
    </source>
</evidence>
<evidence type="ECO:0000269" key="7">
    <source>
    </source>
</evidence>
<evidence type="ECO:0000269" key="8">
    <source>
    </source>
</evidence>
<evidence type="ECO:0000269" key="9">
    <source>
    </source>
</evidence>
<evidence type="ECO:0000269" key="10">
    <source>
    </source>
</evidence>
<evidence type="ECO:0000269" key="11">
    <source>
    </source>
</evidence>
<evidence type="ECO:0000269" key="12">
    <source>
    </source>
</evidence>
<evidence type="ECO:0000269" key="13">
    <source>
    </source>
</evidence>
<evidence type="ECO:0000303" key="14">
    <source>
    </source>
</evidence>
<evidence type="ECO:0000303" key="15">
    <source>
    </source>
</evidence>
<evidence type="ECO:0000303" key="16">
    <source ref="7"/>
</evidence>
<evidence type="ECO:0000305" key="17"/>